<proteinExistence type="inferred from homology"/>
<sequence length="344" mass="36483">MLKVGIVGGTGYTGVELLRLLAQHPQVEVAVITSRSEAGVKVADMYPNLRGHYDGLAFSVPDSAVLGSCDVVFFATPHGVAHALAGELLAAGTRVIDLSADFRLQDAEEWARWYGQPHGAPELLPEAVYGLPEVNRERIRSARLIAVPGCYPTATQLGFLPLLESGLADNARLIADCKSGVSGAGRGAKVGSLFCEASESMMAYAVKGHRHLPEISQGLRRAAGGEVGLTFVPHLTPMIRGIHATLYASVADRSVDLQALYEKRYASEPFVDVMPAGSHPETRSVRGANVCRIAVHRPQGGDLVVVLSVIDNLVKGASGQAVQNMNILFGLDERLGLAHAALLP</sequence>
<evidence type="ECO:0000255" key="1">
    <source>
        <dbReference type="HAMAP-Rule" id="MF_00150"/>
    </source>
</evidence>
<accession>C1DHY0</accession>
<feature type="chain" id="PRO_1000203400" description="N-acetyl-gamma-glutamyl-phosphate reductase">
    <location>
        <begin position="1"/>
        <end position="344"/>
    </location>
</feature>
<feature type="active site" evidence="1">
    <location>
        <position position="150"/>
    </location>
</feature>
<name>ARGC_AZOVD</name>
<gene>
    <name evidence="1" type="primary">argC</name>
    <name type="ordered locus">Avin_46040</name>
</gene>
<dbReference type="EC" id="1.2.1.38" evidence="1"/>
<dbReference type="EMBL" id="CP001157">
    <property type="protein sequence ID" value="ACO80713.1"/>
    <property type="molecule type" value="Genomic_DNA"/>
</dbReference>
<dbReference type="RefSeq" id="WP_012703076.1">
    <property type="nucleotide sequence ID" value="NC_012560.1"/>
</dbReference>
<dbReference type="SMR" id="C1DHY0"/>
<dbReference type="STRING" id="322710.Avin_46040"/>
<dbReference type="EnsemblBacteria" id="ACO80713">
    <property type="protein sequence ID" value="ACO80713"/>
    <property type="gene ID" value="Avin_46040"/>
</dbReference>
<dbReference type="GeneID" id="88187488"/>
<dbReference type="KEGG" id="avn:Avin_46040"/>
<dbReference type="eggNOG" id="COG0002">
    <property type="taxonomic scope" value="Bacteria"/>
</dbReference>
<dbReference type="HOGENOM" id="CLU_006384_0_1_6"/>
<dbReference type="OrthoDB" id="9801289at2"/>
<dbReference type="UniPathway" id="UPA00068">
    <property type="reaction ID" value="UER00108"/>
</dbReference>
<dbReference type="Proteomes" id="UP000002424">
    <property type="component" value="Chromosome"/>
</dbReference>
<dbReference type="GO" id="GO:0005737">
    <property type="term" value="C:cytoplasm"/>
    <property type="evidence" value="ECO:0007669"/>
    <property type="project" value="UniProtKB-SubCell"/>
</dbReference>
<dbReference type="GO" id="GO:0003942">
    <property type="term" value="F:N-acetyl-gamma-glutamyl-phosphate reductase activity"/>
    <property type="evidence" value="ECO:0007669"/>
    <property type="project" value="UniProtKB-UniRule"/>
</dbReference>
<dbReference type="GO" id="GO:0051287">
    <property type="term" value="F:NAD binding"/>
    <property type="evidence" value="ECO:0007669"/>
    <property type="project" value="InterPro"/>
</dbReference>
<dbReference type="GO" id="GO:0070401">
    <property type="term" value="F:NADP+ binding"/>
    <property type="evidence" value="ECO:0007669"/>
    <property type="project" value="InterPro"/>
</dbReference>
<dbReference type="GO" id="GO:0006526">
    <property type="term" value="P:L-arginine biosynthetic process"/>
    <property type="evidence" value="ECO:0007669"/>
    <property type="project" value="UniProtKB-UniRule"/>
</dbReference>
<dbReference type="CDD" id="cd23934">
    <property type="entry name" value="AGPR_1_C"/>
    <property type="match status" value="1"/>
</dbReference>
<dbReference type="CDD" id="cd17895">
    <property type="entry name" value="AGPR_1_N"/>
    <property type="match status" value="1"/>
</dbReference>
<dbReference type="FunFam" id="3.30.360.10:FF:000014">
    <property type="entry name" value="N-acetyl-gamma-glutamyl-phosphate reductase"/>
    <property type="match status" value="1"/>
</dbReference>
<dbReference type="Gene3D" id="3.30.360.10">
    <property type="entry name" value="Dihydrodipicolinate Reductase, domain 2"/>
    <property type="match status" value="1"/>
</dbReference>
<dbReference type="Gene3D" id="3.40.50.720">
    <property type="entry name" value="NAD(P)-binding Rossmann-like Domain"/>
    <property type="match status" value="1"/>
</dbReference>
<dbReference type="HAMAP" id="MF_00150">
    <property type="entry name" value="ArgC_type1"/>
    <property type="match status" value="1"/>
</dbReference>
<dbReference type="InterPro" id="IPR023013">
    <property type="entry name" value="AGPR_AS"/>
</dbReference>
<dbReference type="InterPro" id="IPR000706">
    <property type="entry name" value="AGPR_type-1"/>
</dbReference>
<dbReference type="InterPro" id="IPR036291">
    <property type="entry name" value="NAD(P)-bd_dom_sf"/>
</dbReference>
<dbReference type="InterPro" id="IPR050085">
    <property type="entry name" value="NAGSA_dehydrogenase"/>
</dbReference>
<dbReference type="InterPro" id="IPR000534">
    <property type="entry name" value="Semialdehyde_DH_NAD-bd"/>
</dbReference>
<dbReference type="NCBIfam" id="TIGR01850">
    <property type="entry name" value="argC"/>
    <property type="match status" value="1"/>
</dbReference>
<dbReference type="PANTHER" id="PTHR32338:SF10">
    <property type="entry name" value="N-ACETYL-GAMMA-GLUTAMYL-PHOSPHATE REDUCTASE, CHLOROPLASTIC-RELATED"/>
    <property type="match status" value="1"/>
</dbReference>
<dbReference type="PANTHER" id="PTHR32338">
    <property type="entry name" value="N-ACETYL-GAMMA-GLUTAMYL-PHOSPHATE REDUCTASE, CHLOROPLASTIC-RELATED-RELATED"/>
    <property type="match status" value="1"/>
</dbReference>
<dbReference type="Pfam" id="PF01118">
    <property type="entry name" value="Semialdhyde_dh"/>
    <property type="match status" value="1"/>
</dbReference>
<dbReference type="Pfam" id="PF22698">
    <property type="entry name" value="Semialdhyde_dhC_1"/>
    <property type="match status" value="1"/>
</dbReference>
<dbReference type="SMART" id="SM00859">
    <property type="entry name" value="Semialdhyde_dh"/>
    <property type="match status" value="1"/>
</dbReference>
<dbReference type="SUPFAM" id="SSF55347">
    <property type="entry name" value="Glyceraldehyde-3-phosphate dehydrogenase-like, C-terminal domain"/>
    <property type="match status" value="1"/>
</dbReference>
<dbReference type="SUPFAM" id="SSF51735">
    <property type="entry name" value="NAD(P)-binding Rossmann-fold domains"/>
    <property type="match status" value="1"/>
</dbReference>
<dbReference type="PROSITE" id="PS01224">
    <property type="entry name" value="ARGC"/>
    <property type="match status" value="1"/>
</dbReference>
<comment type="function">
    <text evidence="1">Catalyzes the NADPH-dependent reduction of N-acetyl-5-glutamyl phosphate to yield N-acetyl-L-glutamate 5-semialdehyde.</text>
</comment>
<comment type="catalytic activity">
    <reaction evidence="1">
        <text>N-acetyl-L-glutamate 5-semialdehyde + phosphate + NADP(+) = N-acetyl-L-glutamyl 5-phosphate + NADPH + H(+)</text>
        <dbReference type="Rhea" id="RHEA:21588"/>
        <dbReference type="ChEBI" id="CHEBI:15378"/>
        <dbReference type="ChEBI" id="CHEBI:29123"/>
        <dbReference type="ChEBI" id="CHEBI:43474"/>
        <dbReference type="ChEBI" id="CHEBI:57783"/>
        <dbReference type="ChEBI" id="CHEBI:57936"/>
        <dbReference type="ChEBI" id="CHEBI:58349"/>
        <dbReference type="EC" id="1.2.1.38"/>
    </reaction>
</comment>
<comment type="pathway">
    <text evidence="1">Amino-acid biosynthesis; L-arginine biosynthesis; N(2)-acetyl-L-ornithine from L-glutamate: step 3/4.</text>
</comment>
<comment type="subcellular location">
    <subcellularLocation>
        <location evidence="1">Cytoplasm</location>
    </subcellularLocation>
</comment>
<comment type="similarity">
    <text evidence="1">Belongs to the NAGSA dehydrogenase family. Type 1 subfamily.</text>
</comment>
<protein>
    <recommendedName>
        <fullName evidence="1">N-acetyl-gamma-glutamyl-phosphate reductase</fullName>
        <shortName evidence="1">AGPR</shortName>
        <ecNumber evidence="1">1.2.1.38</ecNumber>
    </recommendedName>
    <alternativeName>
        <fullName evidence="1">N-acetyl-glutamate semialdehyde dehydrogenase</fullName>
        <shortName evidence="1">NAGSA dehydrogenase</shortName>
    </alternativeName>
</protein>
<organism>
    <name type="scientific">Azotobacter vinelandii (strain DJ / ATCC BAA-1303)</name>
    <dbReference type="NCBI Taxonomy" id="322710"/>
    <lineage>
        <taxon>Bacteria</taxon>
        <taxon>Pseudomonadati</taxon>
        <taxon>Pseudomonadota</taxon>
        <taxon>Gammaproteobacteria</taxon>
        <taxon>Pseudomonadales</taxon>
        <taxon>Pseudomonadaceae</taxon>
        <taxon>Azotobacter</taxon>
    </lineage>
</organism>
<reference key="1">
    <citation type="journal article" date="2009" name="J. Bacteriol.">
        <title>Genome sequence of Azotobacter vinelandii, an obligate aerobe specialized to support diverse anaerobic metabolic processes.</title>
        <authorList>
            <person name="Setubal J.C."/>
            <person name="Dos Santos P."/>
            <person name="Goldman B.S."/>
            <person name="Ertesvaag H."/>
            <person name="Espin G."/>
            <person name="Rubio L.M."/>
            <person name="Valla S."/>
            <person name="Almeida N.F."/>
            <person name="Balasubramanian D."/>
            <person name="Cromes L."/>
            <person name="Curatti L."/>
            <person name="Du Z."/>
            <person name="Godsy E."/>
            <person name="Goodner B."/>
            <person name="Hellner-Burris K."/>
            <person name="Hernandez J.A."/>
            <person name="Houmiel K."/>
            <person name="Imperial J."/>
            <person name="Kennedy C."/>
            <person name="Larson T.J."/>
            <person name="Latreille P."/>
            <person name="Ligon L.S."/>
            <person name="Lu J."/>
            <person name="Maerk M."/>
            <person name="Miller N.M."/>
            <person name="Norton S."/>
            <person name="O'Carroll I.P."/>
            <person name="Paulsen I."/>
            <person name="Raulfs E.C."/>
            <person name="Roemer R."/>
            <person name="Rosser J."/>
            <person name="Segura D."/>
            <person name="Slater S."/>
            <person name="Stricklin S.L."/>
            <person name="Studholme D.J."/>
            <person name="Sun J."/>
            <person name="Viana C.J."/>
            <person name="Wallin E."/>
            <person name="Wang B."/>
            <person name="Wheeler C."/>
            <person name="Zhu H."/>
            <person name="Dean D.R."/>
            <person name="Dixon R."/>
            <person name="Wood D."/>
        </authorList>
    </citation>
    <scope>NUCLEOTIDE SEQUENCE [LARGE SCALE GENOMIC DNA]</scope>
    <source>
        <strain>DJ / ATCC BAA-1303</strain>
    </source>
</reference>
<keyword id="KW-0028">Amino-acid biosynthesis</keyword>
<keyword id="KW-0055">Arginine biosynthesis</keyword>
<keyword id="KW-0963">Cytoplasm</keyword>
<keyword id="KW-0521">NADP</keyword>
<keyword id="KW-0560">Oxidoreductase</keyword>